<accession>P13057</accession>
<keyword id="KW-1185">Reference proteome</keyword>
<organismHost>
    <name type="scientific">Escherichia coli</name>
    <dbReference type="NCBI Taxonomy" id="562"/>
</organismHost>
<feature type="chain" id="PRO_0000165229" description="Protein beta">
    <location>
        <begin position="1"/>
        <end position="355"/>
    </location>
</feature>
<organism>
    <name type="scientific">Enterobacteria phage P4</name>
    <name type="common">Bacteriophage P4</name>
    <dbReference type="NCBI Taxonomy" id="10680"/>
    <lineage>
        <taxon>Viruses</taxon>
        <taxon>Duplodnaviria</taxon>
        <taxon>Heunggongvirae</taxon>
        <taxon>Uroviricota</taxon>
        <taxon>Caudoviricetes</taxon>
    </lineage>
</organism>
<reference key="1">
    <citation type="journal article" date="1990" name="J. Virol.">
        <title>Nonessential region of bacteriophage P4: DNA sequence, transcription, gene products, and functions.</title>
        <authorList>
            <person name="Ghisotti D."/>
            <person name="Finkel S."/>
            <person name="Halling C."/>
            <person name="Deho G."/>
            <person name="Sironi G."/>
            <person name="Calendar R."/>
        </authorList>
    </citation>
    <scope>NUCLEOTIDE SEQUENCE [GENOMIC DNA]</scope>
</reference>
<reference key="2">
    <citation type="journal article" date="1990" name="Nucleic Acids Res.">
        <title>DNA sequence of satellite bacteriophage P4.</title>
        <authorList>
            <person name="Halling C."/>
            <person name="Calendar R."/>
            <person name="Christie G.E."/>
            <person name="Dale E.C."/>
            <person name="Deho G."/>
            <person name="Finkel S."/>
            <person name="Flensburg J."/>
            <person name="Ghisotti D."/>
            <person name="Kahn M.L."/>
            <person name="Lane K.B."/>
            <person name="Lin C.-S."/>
            <person name="Lindqvist B.H."/>
            <person name="Pierson L.S."/>
            <person name="Six E.W."/>
            <person name="Sunshine M.G."/>
            <person name="Ziermann R."/>
        </authorList>
    </citation>
    <scope>NUCLEOTIDE SEQUENCE [LARGE SCALE GENOMIC DNA]</scope>
</reference>
<sequence>MKVYFENYSYYPALRTRSAEMTGLNNLSYENKKKILPLISLGKWPRSEEIQVSLDKSLEVMSNLPFILDVTKDNSHHCASSFELLSPENGFKNWIEFCSRNDNIIPVVQMPDSAKLRDISIQARVLEELKGSIAFRIRNLNTDINKTLTSLVSMNSPENAIVFIDLGYIRGNVSAITAAAINSINQIRTEIPEAIISVLATSFPSSVTNFCRENGQSGYIDVIERELHQNIGGSDVAIYGDHGSIHSVVYDNIIGRYVPRIDIALNDSWYFERRPGMNKEGFIEAAKSILAEYPHYQREDSWGAAMIRNAAIGDIAGMGSPAKWIAVRVNLHLNKQIELSEALQYGFDHDEEDLI</sequence>
<protein>
    <recommendedName>
        <fullName>Protein beta</fullName>
    </recommendedName>
</protein>
<gene>
    <name type="primary">Beta</name>
</gene>
<name>VBET_BPP4</name>
<dbReference type="EMBL" id="M27748">
    <property type="protein sequence ID" value="AAA32428.1"/>
    <property type="molecule type" value="Genomic_DNA"/>
</dbReference>
<dbReference type="EMBL" id="X51522">
    <property type="protein sequence ID" value="CAA35895.1"/>
    <property type="molecule type" value="Genomic_DNA"/>
</dbReference>
<dbReference type="RefSeq" id="NP_042033.1">
    <property type="nucleotide sequence ID" value="NC_001609.1"/>
</dbReference>
<dbReference type="KEGG" id="vg:1261083"/>
<dbReference type="Proteomes" id="UP000009093">
    <property type="component" value="Genome"/>
</dbReference>
<dbReference type="InterPro" id="IPR025683">
    <property type="entry name" value="Protein_beta"/>
</dbReference>
<dbReference type="Pfam" id="PF14350">
    <property type="entry name" value="Beta_protein"/>
    <property type="match status" value="1"/>
</dbReference>
<comment type="function">
    <text>The presence of this protein prevents gop protein from killing E.coli.</text>
</comment>
<proteinExistence type="predicted"/>